<accession>C0QUI2</accession>
<comment type="function">
    <text evidence="1">Functions in the biosynthesis of branched-chain amino acids. Catalyzes the dehydration of (2R,3R)-2,3-dihydroxy-3-methylpentanoate (2,3-dihydroxy-3-methylvalerate) into 2-oxo-3-methylpentanoate (2-oxo-3-methylvalerate) and of (2R)-2,3-dihydroxy-3-methylbutanoate (2,3-dihydroxyisovalerate) into 2-oxo-3-methylbutanoate (2-oxoisovalerate), the penultimate precursor to L-isoleucine and L-valine, respectively.</text>
</comment>
<comment type="catalytic activity">
    <reaction evidence="1">
        <text>(2R)-2,3-dihydroxy-3-methylbutanoate = 3-methyl-2-oxobutanoate + H2O</text>
        <dbReference type="Rhea" id="RHEA:24809"/>
        <dbReference type="ChEBI" id="CHEBI:11851"/>
        <dbReference type="ChEBI" id="CHEBI:15377"/>
        <dbReference type="ChEBI" id="CHEBI:49072"/>
        <dbReference type="EC" id="4.2.1.9"/>
    </reaction>
    <physiologicalReaction direction="left-to-right" evidence="1">
        <dbReference type="Rhea" id="RHEA:24810"/>
    </physiologicalReaction>
</comment>
<comment type="catalytic activity">
    <reaction evidence="1">
        <text>(2R,3R)-2,3-dihydroxy-3-methylpentanoate = (S)-3-methyl-2-oxopentanoate + H2O</text>
        <dbReference type="Rhea" id="RHEA:27694"/>
        <dbReference type="ChEBI" id="CHEBI:15377"/>
        <dbReference type="ChEBI" id="CHEBI:35146"/>
        <dbReference type="ChEBI" id="CHEBI:49258"/>
        <dbReference type="EC" id="4.2.1.9"/>
    </reaction>
    <physiologicalReaction direction="left-to-right" evidence="1">
        <dbReference type="Rhea" id="RHEA:27695"/>
    </physiologicalReaction>
</comment>
<comment type="cofactor">
    <cofactor evidence="1">
        <name>[2Fe-2S] cluster</name>
        <dbReference type="ChEBI" id="CHEBI:190135"/>
    </cofactor>
    <text evidence="1">Binds 1 [2Fe-2S] cluster per subunit. This cluster acts as a Lewis acid cofactor.</text>
</comment>
<comment type="cofactor">
    <cofactor evidence="1">
        <name>Mg(2+)</name>
        <dbReference type="ChEBI" id="CHEBI:18420"/>
    </cofactor>
</comment>
<comment type="pathway">
    <text evidence="1">Amino-acid biosynthesis; L-isoleucine biosynthesis; L-isoleucine from 2-oxobutanoate: step 3/4.</text>
</comment>
<comment type="pathway">
    <text evidence="1">Amino-acid biosynthesis; L-valine biosynthesis; L-valine from pyruvate: step 3/4.</text>
</comment>
<comment type="subunit">
    <text evidence="1">Homodimer.</text>
</comment>
<comment type="similarity">
    <text evidence="1">Belongs to the IlvD/Edd family.</text>
</comment>
<feature type="chain" id="PRO_1000116523" description="Dihydroxy-acid dehydratase">
    <location>
        <begin position="1"/>
        <end position="557"/>
    </location>
</feature>
<feature type="active site" description="Proton acceptor" evidence="1">
    <location>
        <position position="469"/>
    </location>
</feature>
<feature type="binding site" evidence="1">
    <location>
        <position position="78"/>
    </location>
    <ligand>
        <name>Mg(2+)</name>
        <dbReference type="ChEBI" id="CHEBI:18420"/>
    </ligand>
</feature>
<feature type="binding site" evidence="1">
    <location>
        <position position="119"/>
    </location>
    <ligand>
        <name>[2Fe-2S] cluster</name>
        <dbReference type="ChEBI" id="CHEBI:190135"/>
    </ligand>
</feature>
<feature type="binding site" evidence="1">
    <location>
        <position position="120"/>
    </location>
    <ligand>
        <name>Mg(2+)</name>
        <dbReference type="ChEBI" id="CHEBI:18420"/>
    </ligand>
</feature>
<feature type="binding site" description="via carbamate group" evidence="1">
    <location>
        <position position="121"/>
    </location>
    <ligand>
        <name>Mg(2+)</name>
        <dbReference type="ChEBI" id="CHEBI:18420"/>
    </ligand>
</feature>
<feature type="binding site" evidence="1">
    <location>
        <position position="192"/>
    </location>
    <ligand>
        <name>[2Fe-2S] cluster</name>
        <dbReference type="ChEBI" id="CHEBI:190135"/>
    </ligand>
</feature>
<feature type="binding site" evidence="1">
    <location>
        <position position="443"/>
    </location>
    <ligand>
        <name>Mg(2+)</name>
        <dbReference type="ChEBI" id="CHEBI:18420"/>
    </ligand>
</feature>
<feature type="modified residue" description="N6-carboxylysine" evidence="1">
    <location>
        <position position="121"/>
    </location>
</feature>
<keyword id="KW-0001">2Fe-2S</keyword>
<keyword id="KW-0028">Amino-acid biosynthesis</keyword>
<keyword id="KW-0100">Branched-chain amino acid biosynthesis</keyword>
<keyword id="KW-0408">Iron</keyword>
<keyword id="KW-0411">Iron-sulfur</keyword>
<keyword id="KW-0456">Lyase</keyword>
<keyword id="KW-0460">Magnesium</keyword>
<keyword id="KW-0479">Metal-binding</keyword>
<keyword id="KW-1185">Reference proteome</keyword>
<sequence>MRSDIVKKGFERAPHRSLLRACGLTDEDFKKPFIGIANSYIDIIPGHVHLREFAQIVKEAVREAGGVPFEFNVIGVDDGIAMGHSGMHYSLPSRELIADSIETVVEAHKLDALVCIPNCDKIVPGMIMAAARLNIPVIFVSGGPMAAGHLPDGRPIDLATAFEAVGAVSRGLMTENELRVIEENACPSCGSCSGMFTANSMNCLSEVLGIALPGNGSILATDPRRQELARKAGEQIVKLVEADLKFRDIVNEETIENAFTLDIAMGGSSNTVLHLLAIANEAGIDFPVEKIDQISRRTPTLCKLAPASQYHMEDLDRAGGISAILKELSKKGLLHLDRPTVSLKTLGEVIEDAEIKDPDVIRPIHNPYSETGGLAVLFGNIAPYGGVVKAAAVDPKIMVHRGKAVCFDSEEEAIAGITGGKVKAGDVVVIRYEGPRGGPGMREMLSPTSAIMGMGLGDKVSLITDGRFSGATRGACIGHISPEAAAGGPIGIIKDGDEILIDIPNRKIELLISEEEFKKRMENFKPKKKEIKSRWLRRYSRFVTSANKGAVLSDSCE</sequence>
<proteinExistence type="inferred from homology"/>
<protein>
    <recommendedName>
        <fullName evidence="1">Dihydroxy-acid dehydratase</fullName>
        <shortName evidence="1">DAD</shortName>
        <ecNumber evidence="1">4.2.1.9</ecNumber>
    </recommendedName>
</protein>
<dbReference type="EC" id="4.2.1.9" evidence="1"/>
<dbReference type="EMBL" id="CP001230">
    <property type="protein sequence ID" value="ACO04153.1"/>
    <property type="molecule type" value="Genomic_DNA"/>
</dbReference>
<dbReference type="RefSeq" id="WP_012676391.1">
    <property type="nucleotide sequence ID" value="NC_012440.1"/>
</dbReference>
<dbReference type="SMR" id="C0QUI2"/>
<dbReference type="STRING" id="123214.PERMA_0558"/>
<dbReference type="PaxDb" id="123214-PERMA_0558"/>
<dbReference type="KEGG" id="pmx:PERMA_0558"/>
<dbReference type="eggNOG" id="COG0129">
    <property type="taxonomic scope" value="Bacteria"/>
</dbReference>
<dbReference type="HOGENOM" id="CLU_014271_4_2_0"/>
<dbReference type="OrthoDB" id="9807077at2"/>
<dbReference type="UniPathway" id="UPA00047">
    <property type="reaction ID" value="UER00057"/>
</dbReference>
<dbReference type="UniPathway" id="UPA00049">
    <property type="reaction ID" value="UER00061"/>
</dbReference>
<dbReference type="Proteomes" id="UP000001366">
    <property type="component" value="Chromosome"/>
</dbReference>
<dbReference type="GO" id="GO:0005829">
    <property type="term" value="C:cytosol"/>
    <property type="evidence" value="ECO:0007669"/>
    <property type="project" value="TreeGrafter"/>
</dbReference>
<dbReference type="GO" id="GO:0051537">
    <property type="term" value="F:2 iron, 2 sulfur cluster binding"/>
    <property type="evidence" value="ECO:0007669"/>
    <property type="project" value="UniProtKB-UniRule"/>
</dbReference>
<dbReference type="GO" id="GO:0004160">
    <property type="term" value="F:dihydroxy-acid dehydratase activity"/>
    <property type="evidence" value="ECO:0007669"/>
    <property type="project" value="UniProtKB-UniRule"/>
</dbReference>
<dbReference type="GO" id="GO:0000287">
    <property type="term" value="F:magnesium ion binding"/>
    <property type="evidence" value="ECO:0007669"/>
    <property type="project" value="UniProtKB-UniRule"/>
</dbReference>
<dbReference type="GO" id="GO:0009097">
    <property type="term" value="P:isoleucine biosynthetic process"/>
    <property type="evidence" value="ECO:0007669"/>
    <property type="project" value="UniProtKB-UniRule"/>
</dbReference>
<dbReference type="GO" id="GO:0009099">
    <property type="term" value="P:L-valine biosynthetic process"/>
    <property type="evidence" value="ECO:0007669"/>
    <property type="project" value="UniProtKB-UniRule"/>
</dbReference>
<dbReference type="FunFam" id="3.50.30.80:FF:000001">
    <property type="entry name" value="Dihydroxy-acid dehydratase"/>
    <property type="match status" value="1"/>
</dbReference>
<dbReference type="Gene3D" id="3.50.30.80">
    <property type="entry name" value="IlvD/EDD C-terminal domain-like"/>
    <property type="match status" value="1"/>
</dbReference>
<dbReference type="HAMAP" id="MF_00012">
    <property type="entry name" value="IlvD"/>
    <property type="match status" value="1"/>
</dbReference>
<dbReference type="InterPro" id="IPR042096">
    <property type="entry name" value="Dihydro-acid_dehy_C"/>
</dbReference>
<dbReference type="InterPro" id="IPR004404">
    <property type="entry name" value="DihydroxyA_deHydtase"/>
</dbReference>
<dbReference type="InterPro" id="IPR020558">
    <property type="entry name" value="DiOHA_6PGluconate_deHydtase_CS"/>
</dbReference>
<dbReference type="InterPro" id="IPR056740">
    <property type="entry name" value="ILV_EDD_C"/>
</dbReference>
<dbReference type="InterPro" id="IPR000581">
    <property type="entry name" value="ILV_EDD_N"/>
</dbReference>
<dbReference type="InterPro" id="IPR037237">
    <property type="entry name" value="IlvD/EDD_N"/>
</dbReference>
<dbReference type="NCBIfam" id="TIGR00110">
    <property type="entry name" value="ilvD"/>
    <property type="match status" value="1"/>
</dbReference>
<dbReference type="NCBIfam" id="NF002068">
    <property type="entry name" value="PRK00911.1"/>
    <property type="match status" value="1"/>
</dbReference>
<dbReference type="PANTHER" id="PTHR43661">
    <property type="entry name" value="D-XYLONATE DEHYDRATASE"/>
    <property type="match status" value="1"/>
</dbReference>
<dbReference type="PANTHER" id="PTHR43661:SF3">
    <property type="entry name" value="D-XYLONATE DEHYDRATASE YAGF-RELATED"/>
    <property type="match status" value="1"/>
</dbReference>
<dbReference type="Pfam" id="PF24877">
    <property type="entry name" value="ILV_EDD_C"/>
    <property type="match status" value="1"/>
</dbReference>
<dbReference type="Pfam" id="PF00920">
    <property type="entry name" value="ILVD_EDD_N"/>
    <property type="match status" value="1"/>
</dbReference>
<dbReference type="SUPFAM" id="SSF143975">
    <property type="entry name" value="IlvD/EDD N-terminal domain-like"/>
    <property type="match status" value="1"/>
</dbReference>
<dbReference type="SUPFAM" id="SSF52016">
    <property type="entry name" value="LeuD/IlvD-like"/>
    <property type="match status" value="1"/>
</dbReference>
<dbReference type="PROSITE" id="PS00886">
    <property type="entry name" value="ILVD_EDD_1"/>
    <property type="match status" value="1"/>
</dbReference>
<dbReference type="PROSITE" id="PS00887">
    <property type="entry name" value="ILVD_EDD_2"/>
    <property type="match status" value="1"/>
</dbReference>
<gene>
    <name evidence="1" type="primary">ilvD</name>
    <name type="ordered locus">PERMA_0558</name>
</gene>
<reference key="1">
    <citation type="journal article" date="2009" name="J. Bacteriol.">
        <title>Complete and draft genome sequences of six members of the Aquificales.</title>
        <authorList>
            <person name="Reysenbach A.-L."/>
            <person name="Hamamura N."/>
            <person name="Podar M."/>
            <person name="Griffiths E."/>
            <person name="Ferreira S."/>
            <person name="Hochstein R."/>
            <person name="Heidelberg J."/>
            <person name="Johnson J."/>
            <person name="Mead D."/>
            <person name="Pohorille A."/>
            <person name="Sarmiento M."/>
            <person name="Schweighofer K."/>
            <person name="Seshadri R."/>
            <person name="Voytek M.A."/>
        </authorList>
    </citation>
    <scope>NUCLEOTIDE SEQUENCE [LARGE SCALE GENOMIC DNA]</scope>
    <source>
        <strain>DSM 14350 / EX-H1</strain>
    </source>
</reference>
<name>ILVD_PERMH</name>
<evidence type="ECO:0000255" key="1">
    <source>
        <dbReference type="HAMAP-Rule" id="MF_00012"/>
    </source>
</evidence>
<organism>
    <name type="scientific">Persephonella marina (strain DSM 14350 / EX-H1)</name>
    <dbReference type="NCBI Taxonomy" id="123214"/>
    <lineage>
        <taxon>Bacteria</taxon>
        <taxon>Pseudomonadati</taxon>
        <taxon>Aquificota</taxon>
        <taxon>Aquificia</taxon>
        <taxon>Aquificales</taxon>
        <taxon>Hydrogenothermaceae</taxon>
        <taxon>Persephonella</taxon>
    </lineage>
</organism>